<evidence type="ECO:0000250" key="1"/>
<evidence type="ECO:0000269" key="2">
    <source>
    </source>
</evidence>
<evidence type="ECO:0000305" key="3"/>
<evidence type="ECO:0007829" key="4">
    <source>
        <dbReference type="PDB" id="1BHN"/>
    </source>
</evidence>
<protein>
    <recommendedName>
        <fullName>Nucleoside diphosphate kinase A 1</fullName>
        <shortName>NDK A 1</shortName>
        <shortName>NDP kinase A 1</shortName>
        <ecNumber>2.7.4.6</ecNumber>
    </recommendedName>
    <alternativeName>
        <fullName>Nucleoside diphosphate kinase NBR-A</fullName>
        <shortName>NDK NBR-A</shortName>
    </alternativeName>
</protein>
<comment type="function">
    <text>Major role in the synthesis of nucleoside triphosphates other than ATP. Possesses nucleoside-diphosphate kinase, serine/threonine-specific protein kinase, geranyl and farnesyl pyrophosphate kinase, histidine protein kinase and 3'-5' exonuclease activities. Involved in cell proliferation, differentiation and development, signal transduction, G protein-coupled receptor endocytosis, and gene expression. Required for neural development including neural patterning and cell fate determination.</text>
</comment>
<comment type="catalytic activity">
    <reaction evidence="2">
        <text>a 2'-deoxyribonucleoside 5'-diphosphate + ATP = a 2'-deoxyribonucleoside 5'-triphosphate + ADP</text>
        <dbReference type="Rhea" id="RHEA:44640"/>
        <dbReference type="ChEBI" id="CHEBI:30616"/>
        <dbReference type="ChEBI" id="CHEBI:61560"/>
        <dbReference type="ChEBI" id="CHEBI:73316"/>
        <dbReference type="ChEBI" id="CHEBI:456216"/>
        <dbReference type="EC" id="2.7.4.6"/>
    </reaction>
</comment>
<comment type="catalytic activity">
    <reaction evidence="2">
        <text>a ribonucleoside 5'-diphosphate + ATP = a ribonucleoside 5'-triphosphate + ADP</text>
        <dbReference type="Rhea" id="RHEA:18113"/>
        <dbReference type="ChEBI" id="CHEBI:30616"/>
        <dbReference type="ChEBI" id="CHEBI:57930"/>
        <dbReference type="ChEBI" id="CHEBI:61557"/>
        <dbReference type="ChEBI" id="CHEBI:456216"/>
        <dbReference type="EC" id="2.7.4.6"/>
    </reaction>
</comment>
<comment type="cofactor">
    <cofactor evidence="1">
        <name>Mg(2+)</name>
        <dbReference type="ChEBI" id="CHEBI:18420"/>
    </cofactor>
</comment>
<comment type="activity regulation">
    <text evidence="1">Autophosphorylation at His-118 increases serine/threonine protein kinase activity of the enzyme. Interaction with the SET complex inhibits exonuclease activity (By similarity).</text>
</comment>
<comment type="subunit">
    <text evidence="2">Homohexamer.</text>
</comment>
<comment type="subcellular location">
    <subcellularLocation>
        <location evidence="2">Cytoplasm</location>
    </subcellularLocation>
    <subcellularLocation>
        <location evidence="2">Cell membrane</location>
    </subcellularLocation>
    <subcellularLocation>
        <location evidence="1">Nucleus</location>
    </subcellularLocation>
</comment>
<comment type="PTM">
    <text>The N-terminus is blocked.</text>
</comment>
<comment type="similarity">
    <text evidence="3">Belongs to the NDK family.</text>
</comment>
<keyword id="KW-0002">3D-structure</keyword>
<keyword id="KW-0067">ATP-binding</keyword>
<keyword id="KW-1003">Cell membrane</keyword>
<keyword id="KW-0963">Cytoplasm</keyword>
<keyword id="KW-0221">Differentiation</keyword>
<keyword id="KW-0903">Direct protein sequencing</keyword>
<keyword id="KW-0254">Endocytosis</keyword>
<keyword id="KW-0418">Kinase</keyword>
<keyword id="KW-0460">Magnesium</keyword>
<keyword id="KW-0472">Membrane</keyword>
<keyword id="KW-0479">Metal-binding</keyword>
<keyword id="KW-0524">Neurogenesis</keyword>
<keyword id="KW-0546">Nucleotide metabolism</keyword>
<keyword id="KW-0547">Nucleotide-binding</keyword>
<keyword id="KW-0539">Nucleus</keyword>
<keyword id="KW-1185">Reference proteome</keyword>
<keyword id="KW-0808">Transferase</keyword>
<organism>
    <name type="scientific">Bos taurus</name>
    <name type="common">Bovine</name>
    <dbReference type="NCBI Taxonomy" id="9913"/>
    <lineage>
        <taxon>Eukaryota</taxon>
        <taxon>Metazoa</taxon>
        <taxon>Chordata</taxon>
        <taxon>Craniata</taxon>
        <taxon>Vertebrata</taxon>
        <taxon>Euteleostomi</taxon>
        <taxon>Mammalia</taxon>
        <taxon>Eutheria</taxon>
        <taxon>Laurasiatheria</taxon>
        <taxon>Artiodactyla</taxon>
        <taxon>Ruminantia</taxon>
        <taxon>Pecora</taxon>
        <taxon>Bovidae</taxon>
        <taxon>Bovinae</taxon>
        <taxon>Bos</taxon>
    </lineage>
</organism>
<dbReference type="EC" id="2.7.4.6"/>
<dbReference type="EMBL" id="X92956">
    <property type="protein sequence ID" value="CAA63532.1"/>
    <property type="molecule type" value="mRNA"/>
</dbReference>
<dbReference type="PDB" id="1BHN">
    <property type="method" value="X-ray"/>
    <property type="resolution" value="2.40 A"/>
    <property type="chains" value="A/B/C/D/E/F=1-152"/>
</dbReference>
<dbReference type="PDBsum" id="1BHN"/>
<dbReference type="SMR" id="P52174"/>
<dbReference type="FunCoup" id="P52174">
    <property type="interactions" value="1991"/>
</dbReference>
<dbReference type="PaxDb" id="9913-ENSBTAP00000006106"/>
<dbReference type="PeptideAtlas" id="P52174"/>
<dbReference type="eggNOG" id="KOG0888">
    <property type="taxonomic scope" value="Eukaryota"/>
</dbReference>
<dbReference type="InParanoid" id="P52174"/>
<dbReference type="EvolutionaryTrace" id="P52174"/>
<dbReference type="Proteomes" id="UP000009136">
    <property type="component" value="Unplaced"/>
</dbReference>
<dbReference type="GO" id="GO:0005737">
    <property type="term" value="C:cytoplasm"/>
    <property type="evidence" value="ECO:0007669"/>
    <property type="project" value="UniProtKB-SubCell"/>
</dbReference>
<dbReference type="GO" id="GO:0005634">
    <property type="term" value="C:nucleus"/>
    <property type="evidence" value="ECO:0007669"/>
    <property type="project" value="UniProtKB-SubCell"/>
</dbReference>
<dbReference type="GO" id="GO:0005886">
    <property type="term" value="C:plasma membrane"/>
    <property type="evidence" value="ECO:0007669"/>
    <property type="project" value="UniProtKB-SubCell"/>
</dbReference>
<dbReference type="GO" id="GO:0005524">
    <property type="term" value="F:ATP binding"/>
    <property type="evidence" value="ECO:0007669"/>
    <property type="project" value="UniProtKB-KW"/>
</dbReference>
<dbReference type="GO" id="GO:0046872">
    <property type="term" value="F:metal ion binding"/>
    <property type="evidence" value="ECO:0007669"/>
    <property type="project" value="UniProtKB-KW"/>
</dbReference>
<dbReference type="GO" id="GO:0004550">
    <property type="term" value="F:nucleoside diphosphate kinase activity"/>
    <property type="evidence" value="ECO:0007669"/>
    <property type="project" value="UniProtKB-EC"/>
</dbReference>
<dbReference type="GO" id="GO:0030154">
    <property type="term" value="P:cell differentiation"/>
    <property type="evidence" value="ECO:0007669"/>
    <property type="project" value="UniProtKB-KW"/>
</dbReference>
<dbReference type="GO" id="GO:0006241">
    <property type="term" value="P:CTP biosynthetic process"/>
    <property type="evidence" value="ECO:0007669"/>
    <property type="project" value="InterPro"/>
</dbReference>
<dbReference type="GO" id="GO:0006897">
    <property type="term" value="P:endocytosis"/>
    <property type="evidence" value="ECO:0007669"/>
    <property type="project" value="UniProtKB-KW"/>
</dbReference>
<dbReference type="GO" id="GO:0006183">
    <property type="term" value="P:GTP biosynthetic process"/>
    <property type="evidence" value="ECO:0007669"/>
    <property type="project" value="InterPro"/>
</dbReference>
<dbReference type="GO" id="GO:0007399">
    <property type="term" value="P:nervous system development"/>
    <property type="evidence" value="ECO:0007669"/>
    <property type="project" value="UniProtKB-KW"/>
</dbReference>
<dbReference type="GO" id="GO:0006228">
    <property type="term" value="P:UTP biosynthetic process"/>
    <property type="evidence" value="ECO:0007669"/>
    <property type="project" value="InterPro"/>
</dbReference>
<dbReference type="CDD" id="cd04413">
    <property type="entry name" value="NDPk_I"/>
    <property type="match status" value="1"/>
</dbReference>
<dbReference type="FunFam" id="3.30.70.141:FF:000039">
    <property type="entry name" value="Nucleoside diphosphate kinase B"/>
    <property type="match status" value="1"/>
</dbReference>
<dbReference type="Gene3D" id="3.30.70.141">
    <property type="entry name" value="Nucleoside diphosphate kinase-like domain"/>
    <property type="match status" value="1"/>
</dbReference>
<dbReference type="HAMAP" id="MF_00451">
    <property type="entry name" value="NDP_kinase"/>
    <property type="match status" value="1"/>
</dbReference>
<dbReference type="InterPro" id="IPR034907">
    <property type="entry name" value="NDK-like_dom"/>
</dbReference>
<dbReference type="InterPro" id="IPR036850">
    <property type="entry name" value="NDK-like_dom_sf"/>
</dbReference>
<dbReference type="InterPro" id="IPR001564">
    <property type="entry name" value="Nucleoside_diP_kinase"/>
</dbReference>
<dbReference type="InterPro" id="IPR023005">
    <property type="entry name" value="Nucleoside_diP_kinase_AS"/>
</dbReference>
<dbReference type="NCBIfam" id="NF001908">
    <property type="entry name" value="PRK00668.1"/>
    <property type="match status" value="1"/>
</dbReference>
<dbReference type="PANTHER" id="PTHR11349">
    <property type="entry name" value="NUCLEOSIDE DIPHOSPHATE KINASE"/>
    <property type="match status" value="1"/>
</dbReference>
<dbReference type="Pfam" id="PF00334">
    <property type="entry name" value="NDK"/>
    <property type="match status" value="1"/>
</dbReference>
<dbReference type="PRINTS" id="PR01243">
    <property type="entry name" value="NUCDPKINASE"/>
</dbReference>
<dbReference type="SMART" id="SM00562">
    <property type="entry name" value="NDK"/>
    <property type="match status" value="1"/>
</dbReference>
<dbReference type="SUPFAM" id="SSF54919">
    <property type="entry name" value="Nucleoside diphosphate kinase, NDK"/>
    <property type="match status" value="1"/>
</dbReference>
<dbReference type="PROSITE" id="PS00469">
    <property type="entry name" value="NDPK"/>
    <property type="match status" value="1"/>
</dbReference>
<dbReference type="PROSITE" id="PS51374">
    <property type="entry name" value="NDPK_LIKE"/>
    <property type="match status" value="1"/>
</dbReference>
<name>NDKA1_BOVIN</name>
<feature type="initiator methionine" description="Removed" evidence="2">
    <location>
        <position position="1"/>
    </location>
</feature>
<feature type="chain" id="PRO_0000137111" description="Nucleoside diphosphate kinase A 1">
    <location>
        <begin position="2"/>
        <end position="152"/>
    </location>
</feature>
<feature type="active site" description="Pros-phosphohistidine intermediate">
    <location>
        <position position="118"/>
    </location>
</feature>
<feature type="binding site">
    <location>
        <position position="12"/>
    </location>
    <ligand>
        <name>ATP</name>
        <dbReference type="ChEBI" id="CHEBI:30616"/>
    </ligand>
</feature>
<feature type="binding site">
    <location>
        <position position="60"/>
    </location>
    <ligand>
        <name>ATP</name>
        <dbReference type="ChEBI" id="CHEBI:30616"/>
    </ligand>
</feature>
<feature type="binding site">
    <location>
        <position position="88"/>
    </location>
    <ligand>
        <name>ATP</name>
        <dbReference type="ChEBI" id="CHEBI:30616"/>
    </ligand>
</feature>
<feature type="binding site">
    <location>
        <position position="94"/>
    </location>
    <ligand>
        <name>ATP</name>
        <dbReference type="ChEBI" id="CHEBI:30616"/>
    </ligand>
</feature>
<feature type="binding site">
    <location>
        <position position="105"/>
    </location>
    <ligand>
        <name>ATP</name>
        <dbReference type="ChEBI" id="CHEBI:30616"/>
    </ligand>
</feature>
<feature type="binding site">
    <location>
        <position position="115"/>
    </location>
    <ligand>
        <name>ATP</name>
        <dbReference type="ChEBI" id="CHEBI:30616"/>
    </ligand>
</feature>
<feature type="strand" evidence="4">
    <location>
        <begin position="6"/>
        <end position="11"/>
    </location>
</feature>
<feature type="helix" evidence="4">
    <location>
        <begin position="13"/>
        <end position="17"/>
    </location>
</feature>
<feature type="helix" evidence="4">
    <location>
        <begin position="21"/>
        <end position="30"/>
    </location>
</feature>
<feature type="strand" evidence="4">
    <location>
        <begin position="34"/>
        <end position="42"/>
    </location>
</feature>
<feature type="helix" evidence="4">
    <location>
        <begin position="45"/>
        <end position="51"/>
    </location>
</feature>
<feature type="helix" evidence="4">
    <location>
        <begin position="53"/>
        <end position="55"/>
    </location>
</feature>
<feature type="helix" evidence="4">
    <location>
        <begin position="61"/>
        <end position="70"/>
    </location>
</feature>
<feature type="strand" evidence="4">
    <location>
        <begin position="71"/>
        <end position="80"/>
    </location>
</feature>
<feature type="helix" evidence="4">
    <location>
        <begin position="83"/>
        <end position="91"/>
    </location>
</feature>
<feature type="turn" evidence="4">
    <location>
        <begin position="96"/>
        <end position="98"/>
    </location>
</feature>
<feature type="helix" evidence="4">
    <location>
        <begin position="104"/>
        <end position="108"/>
    </location>
</feature>
<feature type="turn" evidence="4">
    <location>
        <begin position="112"/>
        <end position="114"/>
    </location>
</feature>
<feature type="strand" evidence="4">
    <location>
        <begin position="117"/>
        <end position="119"/>
    </location>
</feature>
<feature type="helix" evidence="4">
    <location>
        <begin position="123"/>
        <end position="133"/>
    </location>
</feature>
<feature type="helix" evidence="4">
    <location>
        <begin position="136"/>
        <end position="138"/>
    </location>
</feature>
<feature type="helix" evidence="4">
    <location>
        <begin position="147"/>
        <end position="150"/>
    </location>
</feature>
<proteinExistence type="evidence at protein level"/>
<accession>P52174</accession>
<reference key="1">
    <citation type="journal article" date="1998" name="Biochemistry">
        <title>Nucleoside diphosphate kinase from bovine retina: purification, subcellular localization, molecular cloning, and three-dimensional structure.</title>
        <authorList>
            <person name="Abdulaev N.G."/>
            <person name="Karaschuk G.N."/>
            <person name="Ladner J.E."/>
            <person name="Kakuev D.L."/>
            <person name="Yakhyaev A.V."/>
            <person name="Tordova M."/>
            <person name="Gaidarov I.O."/>
            <person name="Popov V.I."/>
            <person name="Fujiwara J.H."/>
            <person name="Chinchilla D."/>
            <person name="Eisenstein E."/>
            <person name="Gilliland G.L."/>
            <person name="Ridge K.D."/>
        </authorList>
    </citation>
    <scope>NUCLEOTIDE SEQUENCE [MRNA]</scope>
    <scope>PROTEIN SEQUENCE OF 2-152</scope>
    <scope>CATALYTIC ACTIVITY</scope>
    <scope>SUBUNIT</scope>
    <scope>SUBCELLULAR LOCATION</scope>
    <scope>BLOCKAGE OF N-TERMINUS</scope>
    <scope>X-RAY CRYSTALLOGRAPHY (2.4 ANGSTROMS)</scope>
    <source>
        <tissue>Retina</tissue>
    </source>
</reference>
<sequence length="152" mass="17261">MANSERTFIAIKPDGVQRGLIGEIIKRFEQKGFRLVAMKFMRASEDLLKEHYIDLKDRPFFAGLVKYMHSGPVVAMVWEGLNVVKTGRVMLGETNPADSKPGTIRGDFCIQVGRNIIHGSDSVESAEKEIALWFHPEELVNYKSCAQNWIYE</sequence>
<gene>
    <name type="primary">NME1-1</name>
</gene>